<sequence length="151" mass="17152">MSTPARRRLMRDFKRLQEDPPTGVSGAPTDNNIMIWNAVIFGPHDTPFEDGTFKLTIEFTEEYPNKPPTVRFVSKVFHPNVYADGGICLDILQNRWSPTYDVSAILTSIQSLLSDPNPNSPANSTAAQLYKENRREYEKRVKACVEQSFID</sequence>
<reference key="1">
    <citation type="journal article" date="1991" name="Proc. Natl. Acad. Sci. U.S.A.">
        <title>Dhr6, a Drosophila homolog of the yeast DNA-repair gene RAD6.</title>
        <authorList>
            <person name="Koken M.H.M."/>
            <person name="Reynolds P."/>
            <person name="Bootsma D."/>
            <person name="Hoeijmakers J.H.J."/>
            <person name="Prakash S."/>
            <person name="Prakash L."/>
        </authorList>
    </citation>
    <scope>NUCLEOTIDE SEQUENCE [GENOMIC DNA / MRNA]</scope>
    <scope>FUNCTION</scope>
</reference>
<reference key="2">
    <citation type="journal article" date="2000" name="Science">
        <title>The genome sequence of Drosophila melanogaster.</title>
        <authorList>
            <person name="Adams M.D."/>
            <person name="Celniker S.E."/>
            <person name="Holt R.A."/>
            <person name="Evans C.A."/>
            <person name="Gocayne J.D."/>
            <person name="Amanatides P.G."/>
            <person name="Scherer S.E."/>
            <person name="Li P.W."/>
            <person name="Hoskins R.A."/>
            <person name="Galle R.F."/>
            <person name="George R.A."/>
            <person name="Lewis S.E."/>
            <person name="Richards S."/>
            <person name="Ashburner M."/>
            <person name="Henderson S.N."/>
            <person name="Sutton G.G."/>
            <person name="Wortman J.R."/>
            <person name="Yandell M.D."/>
            <person name="Zhang Q."/>
            <person name="Chen L.X."/>
            <person name="Brandon R.C."/>
            <person name="Rogers Y.-H.C."/>
            <person name="Blazej R.G."/>
            <person name="Champe M."/>
            <person name="Pfeiffer B.D."/>
            <person name="Wan K.H."/>
            <person name="Doyle C."/>
            <person name="Baxter E.G."/>
            <person name="Helt G."/>
            <person name="Nelson C.R."/>
            <person name="Miklos G.L.G."/>
            <person name="Abril J.F."/>
            <person name="Agbayani A."/>
            <person name="An H.-J."/>
            <person name="Andrews-Pfannkoch C."/>
            <person name="Baldwin D."/>
            <person name="Ballew R.M."/>
            <person name="Basu A."/>
            <person name="Baxendale J."/>
            <person name="Bayraktaroglu L."/>
            <person name="Beasley E.M."/>
            <person name="Beeson K.Y."/>
            <person name="Benos P.V."/>
            <person name="Berman B.P."/>
            <person name="Bhandari D."/>
            <person name="Bolshakov S."/>
            <person name="Borkova D."/>
            <person name="Botchan M.R."/>
            <person name="Bouck J."/>
            <person name="Brokstein P."/>
            <person name="Brottier P."/>
            <person name="Burtis K.C."/>
            <person name="Busam D.A."/>
            <person name="Butler H."/>
            <person name="Cadieu E."/>
            <person name="Center A."/>
            <person name="Chandra I."/>
            <person name="Cherry J.M."/>
            <person name="Cawley S."/>
            <person name="Dahlke C."/>
            <person name="Davenport L.B."/>
            <person name="Davies P."/>
            <person name="de Pablos B."/>
            <person name="Delcher A."/>
            <person name="Deng Z."/>
            <person name="Mays A.D."/>
            <person name="Dew I."/>
            <person name="Dietz S.M."/>
            <person name="Dodson K."/>
            <person name="Doup L.E."/>
            <person name="Downes M."/>
            <person name="Dugan-Rocha S."/>
            <person name="Dunkov B.C."/>
            <person name="Dunn P."/>
            <person name="Durbin K.J."/>
            <person name="Evangelista C.C."/>
            <person name="Ferraz C."/>
            <person name="Ferriera S."/>
            <person name="Fleischmann W."/>
            <person name="Fosler C."/>
            <person name="Gabrielian A.E."/>
            <person name="Garg N.S."/>
            <person name="Gelbart W.M."/>
            <person name="Glasser K."/>
            <person name="Glodek A."/>
            <person name="Gong F."/>
            <person name="Gorrell J.H."/>
            <person name="Gu Z."/>
            <person name="Guan P."/>
            <person name="Harris M."/>
            <person name="Harris N.L."/>
            <person name="Harvey D.A."/>
            <person name="Heiman T.J."/>
            <person name="Hernandez J.R."/>
            <person name="Houck J."/>
            <person name="Hostin D."/>
            <person name="Houston K.A."/>
            <person name="Howland T.J."/>
            <person name="Wei M.-H."/>
            <person name="Ibegwam C."/>
            <person name="Jalali M."/>
            <person name="Kalush F."/>
            <person name="Karpen G.H."/>
            <person name="Ke Z."/>
            <person name="Kennison J.A."/>
            <person name="Ketchum K.A."/>
            <person name="Kimmel B.E."/>
            <person name="Kodira C.D."/>
            <person name="Kraft C.L."/>
            <person name="Kravitz S."/>
            <person name="Kulp D."/>
            <person name="Lai Z."/>
            <person name="Lasko P."/>
            <person name="Lei Y."/>
            <person name="Levitsky A.A."/>
            <person name="Li J.H."/>
            <person name="Li Z."/>
            <person name="Liang Y."/>
            <person name="Lin X."/>
            <person name="Liu X."/>
            <person name="Mattei B."/>
            <person name="McIntosh T.C."/>
            <person name="McLeod M.P."/>
            <person name="McPherson D."/>
            <person name="Merkulov G."/>
            <person name="Milshina N.V."/>
            <person name="Mobarry C."/>
            <person name="Morris J."/>
            <person name="Moshrefi A."/>
            <person name="Mount S.M."/>
            <person name="Moy M."/>
            <person name="Murphy B."/>
            <person name="Murphy L."/>
            <person name="Muzny D.M."/>
            <person name="Nelson D.L."/>
            <person name="Nelson D.R."/>
            <person name="Nelson K.A."/>
            <person name="Nixon K."/>
            <person name="Nusskern D.R."/>
            <person name="Pacleb J.M."/>
            <person name="Palazzolo M."/>
            <person name="Pittman G.S."/>
            <person name="Pan S."/>
            <person name="Pollard J."/>
            <person name="Puri V."/>
            <person name="Reese M.G."/>
            <person name="Reinert K."/>
            <person name="Remington K."/>
            <person name="Saunders R.D.C."/>
            <person name="Scheeler F."/>
            <person name="Shen H."/>
            <person name="Shue B.C."/>
            <person name="Siden-Kiamos I."/>
            <person name="Simpson M."/>
            <person name="Skupski M.P."/>
            <person name="Smith T.J."/>
            <person name="Spier E."/>
            <person name="Spradling A.C."/>
            <person name="Stapleton M."/>
            <person name="Strong R."/>
            <person name="Sun E."/>
            <person name="Svirskas R."/>
            <person name="Tector C."/>
            <person name="Turner R."/>
            <person name="Venter E."/>
            <person name="Wang A.H."/>
            <person name="Wang X."/>
            <person name="Wang Z.-Y."/>
            <person name="Wassarman D.A."/>
            <person name="Weinstock G.M."/>
            <person name="Weissenbach J."/>
            <person name="Williams S.M."/>
            <person name="Woodage T."/>
            <person name="Worley K.C."/>
            <person name="Wu D."/>
            <person name="Yang S."/>
            <person name="Yao Q.A."/>
            <person name="Ye J."/>
            <person name="Yeh R.-F."/>
            <person name="Zaveri J.S."/>
            <person name="Zhan M."/>
            <person name="Zhang G."/>
            <person name="Zhao Q."/>
            <person name="Zheng L."/>
            <person name="Zheng X.H."/>
            <person name="Zhong F.N."/>
            <person name="Zhong W."/>
            <person name="Zhou X."/>
            <person name="Zhu S.C."/>
            <person name="Zhu X."/>
            <person name="Smith H.O."/>
            <person name="Gibbs R.A."/>
            <person name="Myers E.W."/>
            <person name="Rubin G.M."/>
            <person name="Venter J.C."/>
        </authorList>
    </citation>
    <scope>NUCLEOTIDE SEQUENCE [LARGE SCALE GENOMIC DNA]</scope>
    <source>
        <strain>Berkeley</strain>
    </source>
</reference>
<reference key="3">
    <citation type="journal article" date="2002" name="Genome Biol.">
        <title>Annotation of the Drosophila melanogaster euchromatic genome: a systematic review.</title>
        <authorList>
            <person name="Misra S."/>
            <person name="Crosby M.A."/>
            <person name="Mungall C.J."/>
            <person name="Matthews B.B."/>
            <person name="Campbell K.S."/>
            <person name="Hradecky P."/>
            <person name="Huang Y."/>
            <person name="Kaminker J.S."/>
            <person name="Millburn G.H."/>
            <person name="Prochnik S.E."/>
            <person name="Smith C.D."/>
            <person name="Tupy J.L."/>
            <person name="Whitfield E.J."/>
            <person name="Bayraktaroglu L."/>
            <person name="Berman B.P."/>
            <person name="Bettencourt B.R."/>
            <person name="Celniker S.E."/>
            <person name="de Grey A.D.N.J."/>
            <person name="Drysdale R.A."/>
            <person name="Harris N.L."/>
            <person name="Richter J."/>
            <person name="Russo S."/>
            <person name="Schroeder A.J."/>
            <person name="Shu S.Q."/>
            <person name="Stapleton M."/>
            <person name="Yamada C."/>
            <person name="Ashburner M."/>
            <person name="Gelbart W.M."/>
            <person name="Rubin G.M."/>
            <person name="Lewis S.E."/>
        </authorList>
    </citation>
    <scope>GENOME REANNOTATION</scope>
    <source>
        <strain>Berkeley</strain>
    </source>
</reference>
<reference key="4">
    <citation type="submission" date="2003-02" db="EMBL/GenBank/DDBJ databases">
        <authorList>
            <person name="Stapleton M."/>
            <person name="Brokstein P."/>
            <person name="Hong L."/>
            <person name="Agbayani A."/>
            <person name="Carlson J.W."/>
            <person name="Champe M."/>
            <person name="Chavez C."/>
            <person name="Dorsett V."/>
            <person name="Dresnek D."/>
            <person name="Farfan D."/>
            <person name="Frise E."/>
            <person name="George R.A."/>
            <person name="Gonzalez M."/>
            <person name="Guarin H."/>
            <person name="Kronmiller B."/>
            <person name="Li P.W."/>
            <person name="Liao G."/>
            <person name="Miranda A."/>
            <person name="Mungall C.J."/>
            <person name="Nunoo J."/>
            <person name="Pacleb J.M."/>
            <person name="Paragas V."/>
            <person name="Park S."/>
            <person name="Patel S."/>
            <person name="Phouanenavong S."/>
            <person name="Wan K.H."/>
            <person name="Yu C."/>
            <person name="Lewis S.E."/>
            <person name="Rubin G.M."/>
            <person name="Celniker S.E."/>
        </authorList>
    </citation>
    <scope>NUCLEOTIDE SEQUENCE [LARGE SCALE MRNA]</scope>
    <source>
        <strain>Berkeley</strain>
        <tissue>Head</tissue>
    </source>
</reference>
<reference key="5">
    <citation type="journal article" date="2013" name="Mol. Cell">
        <title>Mutations in the intellectual disability gene Ube2a cause neuronal dysfunction and impair parkin-dependent mitophagy.</title>
        <authorList>
            <person name="Haddad D.M."/>
            <person name="Vilain S."/>
            <person name="Vos M."/>
            <person name="Esposito G."/>
            <person name="Matta S."/>
            <person name="Kalscheuer V.M."/>
            <person name="Craessaerts K."/>
            <person name="Leyssen M."/>
            <person name="Nascimento R.M."/>
            <person name="Vianna-Morgante A.M."/>
            <person name="De Strooper B."/>
            <person name="Van Esch H."/>
            <person name="Morais V.A."/>
            <person name="Verstreken P."/>
        </authorList>
    </citation>
    <scope>FUNCTION</scope>
    <scope>DISRUPTION PHENOTYPE</scope>
</reference>
<reference key="6">
    <citation type="journal article" date="2016" name="PLoS Biol.">
        <title>The Deubiquitinase USP47 Stabilizes MAPK by Counteracting the Function of the N-end Rule ligase POE/UBR4 in Drosophila.</title>
        <authorList>
            <person name="Ashton-Beaucage D."/>
            <person name="Lemieux C."/>
            <person name="Udell C.M."/>
            <person name="Sahmi M."/>
            <person name="Rochette S."/>
            <person name="Therrien M."/>
        </authorList>
    </citation>
    <scope>FUNCTION</scope>
</reference>
<protein>
    <recommendedName>
        <fullName>Ubiquitin-conjugating enzyme E2-17 kDa</fullName>
        <ecNumber>2.3.2.23</ecNumber>
    </recommendedName>
    <alternativeName>
        <fullName>E2 ubiquitin-conjugating enzyme 6</fullName>
    </alternativeName>
    <alternativeName>
        <fullName evidence="7">RAD6 homolog</fullName>
        <shortName evidence="7">dRad6</shortName>
    </alternativeName>
    <alternativeName>
        <fullName>Ubiquitin carrier protein</fullName>
    </alternativeName>
    <alternativeName>
        <fullName>Ubiquitin-protein ligase</fullName>
    </alternativeName>
</protein>
<comment type="function">
    <text evidence="1 4 5 6">E2 ubiquitin-conjugating enzyme that accepts ubiquitin from the ubiquitin-activating enzyme E1 and transfers it to a E3 ubiquitin-protein ligase (By similarity). Required for postreplication repair of UV-damaged DNA (PubMed:1902572). Involved in the negative regulation of the Ras/MAPK signaling pathway in the wing by acting with the putative E3 ligases poe, Kcmf1 and Ufd4 to mediate the ubiquitination and proteasomal degradation of rl/MAPK (PubMed:27552662). Required for in mitophagy (PubMed:23685073).</text>
</comment>
<comment type="catalytic activity">
    <reaction evidence="2 3">
        <text>S-ubiquitinyl-[E1 ubiquitin-activating enzyme]-L-cysteine + [E2 ubiquitin-conjugating enzyme]-L-cysteine = [E1 ubiquitin-activating enzyme]-L-cysteine + S-ubiquitinyl-[E2 ubiquitin-conjugating enzyme]-L-cysteine.</text>
        <dbReference type="EC" id="2.3.2.23"/>
    </reaction>
</comment>
<comment type="pathway">
    <text evidence="2">Protein modification; protein ubiquitination.</text>
</comment>
<comment type="subcellular location">
    <subcellularLocation>
        <location>Nucleus</location>
    </subcellularLocation>
</comment>
<comment type="disruption phenotype">
    <text evidence="5">Lethality during the second instar-early third instar larval stages (PubMed:23685073). Mutants show defective synaptic function as a consequence of mitochondrial failure (PubMed:23685073).</text>
</comment>
<comment type="similarity">
    <text evidence="2">Belongs to the ubiquitin-conjugating enzyme family.</text>
</comment>
<keyword id="KW-0067">ATP-binding</keyword>
<keyword id="KW-0227">DNA damage</keyword>
<keyword id="KW-0234">DNA repair</keyword>
<keyword id="KW-0547">Nucleotide-binding</keyword>
<keyword id="KW-0539">Nucleus</keyword>
<keyword id="KW-1185">Reference proteome</keyword>
<keyword id="KW-0808">Transferase</keyword>
<keyword id="KW-0833">Ubl conjugation pathway</keyword>
<proteinExistence type="evidence at transcript level"/>
<organism>
    <name type="scientific">Drosophila melanogaster</name>
    <name type="common">Fruit fly</name>
    <dbReference type="NCBI Taxonomy" id="7227"/>
    <lineage>
        <taxon>Eukaryota</taxon>
        <taxon>Metazoa</taxon>
        <taxon>Ecdysozoa</taxon>
        <taxon>Arthropoda</taxon>
        <taxon>Hexapoda</taxon>
        <taxon>Insecta</taxon>
        <taxon>Pterygota</taxon>
        <taxon>Neoptera</taxon>
        <taxon>Endopterygota</taxon>
        <taxon>Diptera</taxon>
        <taxon>Brachycera</taxon>
        <taxon>Muscomorpha</taxon>
        <taxon>Ephydroidea</taxon>
        <taxon>Drosophilidae</taxon>
        <taxon>Drosophila</taxon>
        <taxon>Sophophora</taxon>
    </lineage>
</organism>
<accession>P25153</accession>
<accession>Q9VN70</accession>
<gene>
    <name evidence="9" type="primary">Ubc6</name>
    <name type="synonym">Dhr6</name>
    <name evidence="9" type="synonym">UbcD6</name>
    <name evidence="9" type="ORF">CG2013</name>
</gene>
<name>UBCD6_DROME</name>
<feature type="chain" id="PRO_0000082523" description="Ubiquitin-conjugating enzyme E2-17 kDa">
    <location>
        <begin position="1"/>
        <end position="151"/>
    </location>
</feature>
<feature type="domain" description="UBC core" evidence="2">
    <location>
        <begin position="4"/>
        <end position="150"/>
    </location>
</feature>
<feature type="active site" description="Glycyl thioester intermediate" evidence="2 3">
    <location>
        <position position="88"/>
    </location>
</feature>
<feature type="sequence conflict" description="In Ref. 1; AAA28308/AAA28309." evidence="8" ref="1">
    <original>T</original>
    <variation>R</variation>
    <location>
        <position position="99"/>
    </location>
</feature>
<dbReference type="EC" id="2.3.2.23"/>
<dbReference type="EMBL" id="M63792">
    <property type="protein sequence ID" value="AAA28308.1"/>
    <property type="molecule type" value="mRNA"/>
</dbReference>
<dbReference type="EMBL" id="M64435">
    <property type="protein sequence ID" value="AAA28309.1"/>
    <property type="molecule type" value="Genomic_DNA"/>
</dbReference>
<dbReference type="EMBL" id="M63791">
    <property type="protein sequence ID" value="AAA28309.1"/>
    <property type="status" value="JOINED"/>
    <property type="molecule type" value="Genomic_DNA"/>
</dbReference>
<dbReference type="EMBL" id="AE014297">
    <property type="protein sequence ID" value="AAF52079.1"/>
    <property type="molecule type" value="Genomic_DNA"/>
</dbReference>
<dbReference type="EMBL" id="BT003481">
    <property type="protein sequence ID" value="AAO39484.1"/>
    <property type="molecule type" value="mRNA"/>
</dbReference>
<dbReference type="PIR" id="A39392">
    <property type="entry name" value="A39392"/>
</dbReference>
<dbReference type="RefSeq" id="NP_001246916.1">
    <property type="nucleotide sequence ID" value="NM_001259987.3"/>
</dbReference>
<dbReference type="RefSeq" id="NP_524230.2">
    <property type="nucleotide sequence ID" value="NM_079506.4"/>
</dbReference>
<dbReference type="SMR" id="P25153"/>
<dbReference type="BioGRID" id="65824">
    <property type="interactions" value="6"/>
</dbReference>
<dbReference type="FunCoup" id="P25153">
    <property type="interactions" value="2270"/>
</dbReference>
<dbReference type="STRING" id="7227.FBpp0078490"/>
<dbReference type="PaxDb" id="7227-FBpp0078490"/>
<dbReference type="DNASU" id="40610"/>
<dbReference type="EnsemblMetazoa" id="FBtr0078849">
    <property type="protein sequence ID" value="FBpp0078490"/>
    <property type="gene ID" value="FBgn0004436"/>
</dbReference>
<dbReference type="EnsemblMetazoa" id="FBtr0306106">
    <property type="protein sequence ID" value="FBpp0297243"/>
    <property type="gene ID" value="FBgn0004436"/>
</dbReference>
<dbReference type="GeneID" id="40610"/>
<dbReference type="KEGG" id="dme:Dmel_CG2013"/>
<dbReference type="AGR" id="FB:FBgn0004436"/>
<dbReference type="CTD" id="40610"/>
<dbReference type="FlyBase" id="FBgn0004436">
    <property type="gene designation" value="Ubc6"/>
</dbReference>
<dbReference type="VEuPathDB" id="VectorBase:FBgn0004436"/>
<dbReference type="eggNOG" id="KOG0419">
    <property type="taxonomic scope" value="Eukaryota"/>
</dbReference>
<dbReference type="GeneTree" id="ENSGT00940000156580"/>
<dbReference type="HOGENOM" id="CLU_030988_10_2_1"/>
<dbReference type="InParanoid" id="P25153"/>
<dbReference type="OMA" id="DHKSQYI"/>
<dbReference type="OrthoDB" id="9984419at2759"/>
<dbReference type="PhylomeDB" id="P25153"/>
<dbReference type="Reactome" id="R-DME-8866652">
    <property type="pathway name" value="Synthesis of active ubiquitin: roles of E1 and E2 enzymes"/>
</dbReference>
<dbReference type="Reactome" id="R-DME-8866654">
    <property type="pathway name" value="E3 ubiquitin ligases ubiquitinate target proteins"/>
</dbReference>
<dbReference type="Reactome" id="R-DME-983168">
    <property type="pathway name" value="Antigen processing: Ubiquitination &amp; Proteasome degradation"/>
</dbReference>
<dbReference type="UniPathway" id="UPA00143"/>
<dbReference type="BioGRID-ORCS" id="40610">
    <property type="hits" value="1 hit in 3 CRISPR screens"/>
</dbReference>
<dbReference type="GenomeRNAi" id="40610"/>
<dbReference type="PRO" id="PR:P25153"/>
<dbReference type="Proteomes" id="UP000000803">
    <property type="component" value="Chromosome 3R"/>
</dbReference>
<dbReference type="Bgee" id="FBgn0004436">
    <property type="expression patterns" value="Expressed in indirect flight muscle cell (Drosophila) in body wall and 265 other cell types or tissues"/>
</dbReference>
<dbReference type="ExpressionAtlas" id="P25153">
    <property type="expression patterns" value="baseline and differential"/>
</dbReference>
<dbReference type="GO" id="GO:0005737">
    <property type="term" value="C:cytoplasm"/>
    <property type="evidence" value="ECO:0000314"/>
    <property type="project" value="BHF-UCL"/>
</dbReference>
<dbReference type="GO" id="GO:0033503">
    <property type="term" value="C:HULC complex"/>
    <property type="evidence" value="ECO:0000318"/>
    <property type="project" value="GO_Central"/>
</dbReference>
<dbReference type="GO" id="GO:0005634">
    <property type="term" value="C:nucleus"/>
    <property type="evidence" value="ECO:0000314"/>
    <property type="project" value="BHF-UCL"/>
</dbReference>
<dbReference type="GO" id="GO:0005524">
    <property type="term" value="F:ATP binding"/>
    <property type="evidence" value="ECO:0007669"/>
    <property type="project" value="UniProtKB-KW"/>
</dbReference>
<dbReference type="GO" id="GO:0002039">
    <property type="term" value="F:p53 binding"/>
    <property type="evidence" value="ECO:0000353"/>
    <property type="project" value="BHF-UCL"/>
</dbReference>
<dbReference type="GO" id="GO:0019904">
    <property type="term" value="F:protein domain specific binding"/>
    <property type="evidence" value="ECO:0000353"/>
    <property type="project" value="BHF-UCL"/>
</dbReference>
<dbReference type="GO" id="GO:0061631">
    <property type="term" value="F:ubiquitin conjugating enzyme activity"/>
    <property type="evidence" value="ECO:0000315"/>
    <property type="project" value="FlyBase"/>
</dbReference>
<dbReference type="GO" id="GO:0004842">
    <property type="term" value="F:ubiquitin-protein transferase activity"/>
    <property type="evidence" value="ECO:0000250"/>
    <property type="project" value="FlyBase"/>
</dbReference>
<dbReference type="GO" id="GO:0007098">
    <property type="term" value="P:centrosome cycle"/>
    <property type="evidence" value="ECO:0000315"/>
    <property type="project" value="FlyBase"/>
</dbReference>
<dbReference type="GO" id="GO:0051299">
    <property type="term" value="P:centrosome separation"/>
    <property type="evidence" value="ECO:0000315"/>
    <property type="project" value="FlyBase"/>
</dbReference>
<dbReference type="GO" id="GO:0006281">
    <property type="term" value="P:DNA repair"/>
    <property type="evidence" value="ECO:0000316"/>
    <property type="project" value="FlyBase"/>
</dbReference>
<dbReference type="GO" id="GO:0032456">
    <property type="term" value="P:endocytic recycling"/>
    <property type="evidence" value="ECO:0000315"/>
    <property type="project" value="FlyBase"/>
</dbReference>
<dbReference type="GO" id="GO:0007507">
    <property type="term" value="P:heart development"/>
    <property type="evidence" value="ECO:0000315"/>
    <property type="project" value="FlyBase"/>
</dbReference>
<dbReference type="GO" id="GO:0043066">
    <property type="term" value="P:negative regulation of apoptotic process"/>
    <property type="evidence" value="ECO:0000315"/>
    <property type="project" value="FlyBase"/>
</dbReference>
<dbReference type="GO" id="GO:0043518">
    <property type="term" value="P:negative regulation of DNA damage response, signal transduction by p53 class mediator"/>
    <property type="evidence" value="ECO:0000315"/>
    <property type="project" value="BHF-UCL"/>
</dbReference>
<dbReference type="GO" id="GO:0070373">
    <property type="term" value="P:negative regulation of ERK1 and ERK2 cascade"/>
    <property type="evidence" value="ECO:0000316"/>
    <property type="project" value="FlyBase"/>
</dbReference>
<dbReference type="GO" id="GO:0031452">
    <property type="term" value="P:negative regulation of heterochromatin formation"/>
    <property type="evidence" value="ECO:0000315"/>
    <property type="project" value="FlyBase"/>
</dbReference>
<dbReference type="GO" id="GO:1902166">
    <property type="term" value="P:negative regulation of intrinsic apoptotic signaling pathway in response to DNA damage by p53 class mediator"/>
    <property type="evidence" value="ECO:0000315"/>
    <property type="project" value="BHF-UCL"/>
</dbReference>
<dbReference type="GO" id="GO:0045893">
    <property type="term" value="P:positive regulation of DNA-templated transcription"/>
    <property type="evidence" value="ECO:0000315"/>
    <property type="project" value="FlyBase"/>
</dbReference>
<dbReference type="GO" id="GO:1901526">
    <property type="term" value="P:positive regulation of mitophagy"/>
    <property type="evidence" value="ECO:0000315"/>
    <property type="project" value="FlyBase"/>
</dbReference>
<dbReference type="GO" id="GO:0032436">
    <property type="term" value="P:positive regulation of proteasomal ubiquitin-dependent protein catabolic process"/>
    <property type="evidence" value="ECO:0000315"/>
    <property type="project" value="BHF-UCL"/>
</dbReference>
<dbReference type="GO" id="GO:0043161">
    <property type="term" value="P:proteasome-mediated ubiquitin-dependent protein catabolic process"/>
    <property type="evidence" value="ECO:0000315"/>
    <property type="project" value="FlyBase"/>
</dbReference>
<dbReference type="GO" id="GO:0000209">
    <property type="term" value="P:protein polyubiquitination"/>
    <property type="evidence" value="ECO:0000318"/>
    <property type="project" value="GO_Central"/>
</dbReference>
<dbReference type="GO" id="GO:0006511">
    <property type="term" value="P:ubiquitin-dependent protein catabolic process"/>
    <property type="evidence" value="ECO:0000315"/>
    <property type="project" value="BHF-UCL"/>
</dbReference>
<dbReference type="CDD" id="cd23790">
    <property type="entry name" value="UBCc_UBE2A_2B"/>
    <property type="match status" value="1"/>
</dbReference>
<dbReference type="FunFam" id="3.10.110.10:FF:000004">
    <property type="entry name" value="Ubiquitin-conjugating enzyme E2 A"/>
    <property type="match status" value="1"/>
</dbReference>
<dbReference type="Gene3D" id="3.10.110.10">
    <property type="entry name" value="Ubiquitin Conjugating Enzyme"/>
    <property type="match status" value="1"/>
</dbReference>
<dbReference type="InterPro" id="IPR050113">
    <property type="entry name" value="Ub_conjugating_enzyme"/>
</dbReference>
<dbReference type="InterPro" id="IPR000608">
    <property type="entry name" value="UBQ-conjugat_E2_core"/>
</dbReference>
<dbReference type="InterPro" id="IPR023313">
    <property type="entry name" value="UBQ-conjugating_AS"/>
</dbReference>
<dbReference type="InterPro" id="IPR016135">
    <property type="entry name" value="UBQ-conjugating_enzyme/RWD"/>
</dbReference>
<dbReference type="PANTHER" id="PTHR24067">
    <property type="entry name" value="UBIQUITIN-CONJUGATING ENZYME E2"/>
    <property type="match status" value="1"/>
</dbReference>
<dbReference type="Pfam" id="PF00179">
    <property type="entry name" value="UQ_con"/>
    <property type="match status" value="1"/>
</dbReference>
<dbReference type="SMART" id="SM00212">
    <property type="entry name" value="UBCc"/>
    <property type="match status" value="1"/>
</dbReference>
<dbReference type="SUPFAM" id="SSF54495">
    <property type="entry name" value="UBC-like"/>
    <property type="match status" value="1"/>
</dbReference>
<dbReference type="PROSITE" id="PS00183">
    <property type="entry name" value="UBC_1"/>
    <property type="match status" value="1"/>
</dbReference>
<dbReference type="PROSITE" id="PS50127">
    <property type="entry name" value="UBC_2"/>
    <property type="match status" value="1"/>
</dbReference>
<evidence type="ECO:0000250" key="1">
    <source>
        <dbReference type="UniProtKB" id="P49459"/>
    </source>
</evidence>
<evidence type="ECO:0000255" key="2">
    <source>
        <dbReference type="PROSITE-ProRule" id="PRU00388"/>
    </source>
</evidence>
<evidence type="ECO:0000255" key="3">
    <source>
        <dbReference type="PROSITE-ProRule" id="PRU10133"/>
    </source>
</evidence>
<evidence type="ECO:0000269" key="4">
    <source>
    </source>
</evidence>
<evidence type="ECO:0000269" key="5">
    <source>
    </source>
</evidence>
<evidence type="ECO:0000269" key="6">
    <source>
    </source>
</evidence>
<evidence type="ECO:0000303" key="7">
    <source>
    </source>
</evidence>
<evidence type="ECO:0000305" key="8"/>
<evidence type="ECO:0000312" key="9">
    <source>
        <dbReference type="FlyBase" id="FBgn0004436"/>
    </source>
</evidence>